<keyword id="KW-0028">Amino-acid biosynthesis</keyword>
<keyword id="KW-0100">Branched-chain amino acid biosynthesis</keyword>
<keyword id="KW-0460">Magnesium</keyword>
<keyword id="KW-0479">Metal-binding</keyword>
<keyword id="KW-0521">NADP</keyword>
<keyword id="KW-0560">Oxidoreductase</keyword>
<keyword id="KW-1185">Reference proteome</keyword>
<sequence>MAKVYYDNDVNKEYLKNKKIAVLGYGSQGHAHALNLKDSGYDVVIGVREGQSRTKAEEDGFQAYDVSEAVERADVTVVLMPDEVQQRVFNEEIVPHLKPQSALVFAHGFNVHFGAIKAPDDVDVFLVAPKGPGHLVRREYVKGSAVPALFAVDQDVTGDAKALALNYAHGIGATRAGVIETTFKEETETDLFGEQAVLCGGITKLIHYGFETLTEAGYQPELAYFEVLHEMKLIVDLMYEGGMEKMRHSISNTAEFGDYVSGARVITPEVKENMKQVLADIQSGTFSRQFIEDNNNGFESFKSMRSTQAGHPIEKVGADLRMMMPFINNN</sequence>
<comment type="function">
    <text evidence="1">Involved in the biosynthesis of branched-chain amino acids (BCAA). Catalyzes an alkyl-migration followed by a ketol-acid reduction of (S)-2-acetolactate (S2AL) to yield (R)-2,3-dihydroxy-isovalerate. In the isomerase reaction, S2AL is rearranged via a Mg-dependent methyl migration to produce 3-hydroxy-3-methyl-2-ketobutyrate (HMKB). In the reductase reaction, this 2-ketoacid undergoes a metal-dependent reduction by NADPH to yield (R)-2,3-dihydroxy-isovalerate.</text>
</comment>
<comment type="catalytic activity">
    <reaction evidence="1">
        <text>(2R)-2,3-dihydroxy-3-methylbutanoate + NADP(+) = (2S)-2-acetolactate + NADPH + H(+)</text>
        <dbReference type="Rhea" id="RHEA:22068"/>
        <dbReference type="ChEBI" id="CHEBI:15378"/>
        <dbReference type="ChEBI" id="CHEBI:49072"/>
        <dbReference type="ChEBI" id="CHEBI:57783"/>
        <dbReference type="ChEBI" id="CHEBI:58349"/>
        <dbReference type="ChEBI" id="CHEBI:58476"/>
        <dbReference type="EC" id="1.1.1.86"/>
    </reaction>
</comment>
<comment type="catalytic activity">
    <reaction evidence="1">
        <text>(2R,3R)-2,3-dihydroxy-3-methylpentanoate + NADP(+) = (S)-2-ethyl-2-hydroxy-3-oxobutanoate + NADPH + H(+)</text>
        <dbReference type="Rhea" id="RHEA:13493"/>
        <dbReference type="ChEBI" id="CHEBI:15378"/>
        <dbReference type="ChEBI" id="CHEBI:49256"/>
        <dbReference type="ChEBI" id="CHEBI:49258"/>
        <dbReference type="ChEBI" id="CHEBI:57783"/>
        <dbReference type="ChEBI" id="CHEBI:58349"/>
        <dbReference type="EC" id="1.1.1.86"/>
    </reaction>
</comment>
<comment type="cofactor">
    <cofactor evidence="1">
        <name>Mg(2+)</name>
        <dbReference type="ChEBI" id="CHEBI:18420"/>
    </cofactor>
    <text evidence="1">Binds 2 magnesium ions per subunit.</text>
</comment>
<comment type="pathway">
    <text evidence="1">Amino-acid biosynthesis; L-isoleucine biosynthesis; L-isoleucine from 2-oxobutanoate: step 2/4.</text>
</comment>
<comment type="pathway">
    <text evidence="1">Amino-acid biosynthesis; L-valine biosynthesis; L-valine from pyruvate: step 2/4.</text>
</comment>
<comment type="similarity">
    <text evidence="1">Belongs to the ketol-acid reductoisomerase family.</text>
</comment>
<dbReference type="EC" id="1.1.1.86" evidence="1"/>
<dbReference type="EMBL" id="AP009484">
    <property type="protein sequence ID" value="BAH17565.1"/>
    <property type="molecule type" value="Genomic_DNA"/>
</dbReference>
<dbReference type="RefSeq" id="WP_012656765.1">
    <property type="nucleotide sequence ID" value="NC_011999.1"/>
</dbReference>
<dbReference type="SMR" id="B9EBF4"/>
<dbReference type="STRING" id="458233.MCCL_0858"/>
<dbReference type="KEGG" id="mcl:MCCL_0858"/>
<dbReference type="eggNOG" id="COG0059">
    <property type="taxonomic scope" value="Bacteria"/>
</dbReference>
<dbReference type="HOGENOM" id="CLU_033821_0_1_9"/>
<dbReference type="OrthoDB" id="9804088at2"/>
<dbReference type="UniPathway" id="UPA00047">
    <property type="reaction ID" value="UER00056"/>
</dbReference>
<dbReference type="UniPathway" id="UPA00049">
    <property type="reaction ID" value="UER00060"/>
</dbReference>
<dbReference type="Proteomes" id="UP000001383">
    <property type="component" value="Chromosome"/>
</dbReference>
<dbReference type="GO" id="GO:0005829">
    <property type="term" value="C:cytosol"/>
    <property type="evidence" value="ECO:0007669"/>
    <property type="project" value="TreeGrafter"/>
</dbReference>
<dbReference type="GO" id="GO:0004455">
    <property type="term" value="F:ketol-acid reductoisomerase activity"/>
    <property type="evidence" value="ECO:0007669"/>
    <property type="project" value="UniProtKB-UniRule"/>
</dbReference>
<dbReference type="GO" id="GO:0000287">
    <property type="term" value="F:magnesium ion binding"/>
    <property type="evidence" value="ECO:0007669"/>
    <property type="project" value="UniProtKB-UniRule"/>
</dbReference>
<dbReference type="GO" id="GO:0050661">
    <property type="term" value="F:NADP binding"/>
    <property type="evidence" value="ECO:0007669"/>
    <property type="project" value="InterPro"/>
</dbReference>
<dbReference type="GO" id="GO:0009097">
    <property type="term" value="P:isoleucine biosynthetic process"/>
    <property type="evidence" value="ECO:0007669"/>
    <property type="project" value="UniProtKB-UniRule"/>
</dbReference>
<dbReference type="GO" id="GO:0009099">
    <property type="term" value="P:L-valine biosynthetic process"/>
    <property type="evidence" value="ECO:0007669"/>
    <property type="project" value="UniProtKB-UniRule"/>
</dbReference>
<dbReference type="FunFam" id="3.40.50.720:FF:000023">
    <property type="entry name" value="Ketol-acid reductoisomerase (NADP(+))"/>
    <property type="match status" value="1"/>
</dbReference>
<dbReference type="Gene3D" id="6.10.240.10">
    <property type="match status" value="1"/>
</dbReference>
<dbReference type="Gene3D" id="3.40.50.720">
    <property type="entry name" value="NAD(P)-binding Rossmann-like Domain"/>
    <property type="match status" value="1"/>
</dbReference>
<dbReference type="HAMAP" id="MF_00435">
    <property type="entry name" value="IlvC"/>
    <property type="match status" value="1"/>
</dbReference>
<dbReference type="InterPro" id="IPR008927">
    <property type="entry name" value="6-PGluconate_DH-like_C_sf"/>
</dbReference>
<dbReference type="InterPro" id="IPR013023">
    <property type="entry name" value="KARI"/>
</dbReference>
<dbReference type="InterPro" id="IPR000506">
    <property type="entry name" value="KARI_C"/>
</dbReference>
<dbReference type="InterPro" id="IPR013116">
    <property type="entry name" value="KARI_N"/>
</dbReference>
<dbReference type="InterPro" id="IPR014359">
    <property type="entry name" value="KARI_prok"/>
</dbReference>
<dbReference type="InterPro" id="IPR036291">
    <property type="entry name" value="NAD(P)-bd_dom_sf"/>
</dbReference>
<dbReference type="NCBIfam" id="TIGR00465">
    <property type="entry name" value="ilvC"/>
    <property type="match status" value="1"/>
</dbReference>
<dbReference type="NCBIfam" id="NF004017">
    <property type="entry name" value="PRK05479.1"/>
    <property type="match status" value="1"/>
</dbReference>
<dbReference type="NCBIfam" id="NF009940">
    <property type="entry name" value="PRK13403.1"/>
    <property type="match status" value="1"/>
</dbReference>
<dbReference type="PANTHER" id="PTHR21371">
    <property type="entry name" value="KETOL-ACID REDUCTOISOMERASE, MITOCHONDRIAL"/>
    <property type="match status" value="1"/>
</dbReference>
<dbReference type="PANTHER" id="PTHR21371:SF1">
    <property type="entry name" value="KETOL-ACID REDUCTOISOMERASE, MITOCHONDRIAL"/>
    <property type="match status" value="1"/>
</dbReference>
<dbReference type="Pfam" id="PF01450">
    <property type="entry name" value="KARI_C"/>
    <property type="match status" value="1"/>
</dbReference>
<dbReference type="Pfam" id="PF07991">
    <property type="entry name" value="KARI_N"/>
    <property type="match status" value="1"/>
</dbReference>
<dbReference type="PIRSF" id="PIRSF000116">
    <property type="entry name" value="IlvC_gammaproteo"/>
    <property type="match status" value="1"/>
</dbReference>
<dbReference type="SUPFAM" id="SSF48179">
    <property type="entry name" value="6-phosphogluconate dehydrogenase C-terminal domain-like"/>
    <property type="match status" value="1"/>
</dbReference>
<dbReference type="SUPFAM" id="SSF51735">
    <property type="entry name" value="NAD(P)-binding Rossmann-fold domains"/>
    <property type="match status" value="1"/>
</dbReference>
<dbReference type="PROSITE" id="PS51851">
    <property type="entry name" value="KARI_C"/>
    <property type="match status" value="1"/>
</dbReference>
<dbReference type="PROSITE" id="PS51850">
    <property type="entry name" value="KARI_N"/>
    <property type="match status" value="1"/>
</dbReference>
<name>ILVC_MACCJ</name>
<protein>
    <recommendedName>
        <fullName evidence="1">Ketol-acid reductoisomerase (NADP(+))</fullName>
        <shortName evidence="1">KARI</shortName>
        <ecNumber evidence="1">1.1.1.86</ecNumber>
    </recommendedName>
    <alternativeName>
        <fullName evidence="1">Acetohydroxy-acid isomeroreductase</fullName>
        <shortName evidence="1">AHIR</shortName>
    </alternativeName>
    <alternativeName>
        <fullName evidence="1">Alpha-keto-beta-hydroxylacyl reductoisomerase</fullName>
    </alternativeName>
    <alternativeName>
        <fullName evidence="1">Ketol-acid reductoisomerase type 1</fullName>
    </alternativeName>
    <alternativeName>
        <fullName evidence="1">Ketol-acid reductoisomerase type I</fullName>
    </alternativeName>
</protein>
<gene>
    <name evidence="1" type="primary">ilvC</name>
    <name type="ordered locus">MCCL_0858</name>
</gene>
<proteinExistence type="inferred from homology"/>
<accession>B9EBF4</accession>
<feature type="chain" id="PRO_1000190975" description="Ketol-acid reductoisomerase (NADP(+))">
    <location>
        <begin position="1"/>
        <end position="330"/>
    </location>
</feature>
<feature type="domain" description="KARI N-terminal Rossmann" evidence="2">
    <location>
        <begin position="2"/>
        <end position="181"/>
    </location>
</feature>
<feature type="domain" description="KARI C-terminal knotted" evidence="3">
    <location>
        <begin position="182"/>
        <end position="327"/>
    </location>
</feature>
<feature type="active site" evidence="1">
    <location>
        <position position="107"/>
    </location>
</feature>
<feature type="binding site" evidence="1">
    <location>
        <begin position="25"/>
        <end position="28"/>
    </location>
    <ligand>
        <name>NADP(+)</name>
        <dbReference type="ChEBI" id="CHEBI:58349"/>
    </ligand>
</feature>
<feature type="binding site" evidence="1">
    <location>
        <position position="48"/>
    </location>
    <ligand>
        <name>NADP(+)</name>
        <dbReference type="ChEBI" id="CHEBI:58349"/>
    </ligand>
</feature>
<feature type="binding site" evidence="1">
    <location>
        <position position="52"/>
    </location>
    <ligand>
        <name>NADP(+)</name>
        <dbReference type="ChEBI" id="CHEBI:58349"/>
    </ligand>
</feature>
<feature type="binding site" evidence="1">
    <location>
        <begin position="82"/>
        <end position="85"/>
    </location>
    <ligand>
        <name>NADP(+)</name>
        <dbReference type="ChEBI" id="CHEBI:58349"/>
    </ligand>
</feature>
<feature type="binding site" evidence="1">
    <location>
        <position position="133"/>
    </location>
    <ligand>
        <name>NADP(+)</name>
        <dbReference type="ChEBI" id="CHEBI:58349"/>
    </ligand>
</feature>
<feature type="binding site" evidence="1">
    <location>
        <position position="190"/>
    </location>
    <ligand>
        <name>Mg(2+)</name>
        <dbReference type="ChEBI" id="CHEBI:18420"/>
        <label>1</label>
    </ligand>
</feature>
<feature type="binding site" evidence="1">
    <location>
        <position position="190"/>
    </location>
    <ligand>
        <name>Mg(2+)</name>
        <dbReference type="ChEBI" id="CHEBI:18420"/>
        <label>2</label>
    </ligand>
</feature>
<feature type="binding site" evidence="1">
    <location>
        <position position="194"/>
    </location>
    <ligand>
        <name>Mg(2+)</name>
        <dbReference type="ChEBI" id="CHEBI:18420"/>
        <label>1</label>
    </ligand>
</feature>
<feature type="binding site" evidence="1">
    <location>
        <position position="226"/>
    </location>
    <ligand>
        <name>Mg(2+)</name>
        <dbReference type="ChEBI" id="CHEBI:18420"/>
        <label>2</label>
    </ligand>
</feature>
<feature type="binding site" evidence="1">
    <location>
        <position position="230"/>
    </location>
    <ligand>
        <name>Mg(2+)</name>
        <dbReference type="ChEBI" id="CHEBI:18420"/>
        <label>2</label>
    </ligand>
</feature>
<feature type="binding site" evidence="1">
    <location>
        <position position="251"/>
    </location>
    <ligand>
        <name>substrate</name>
    </ligand>
</feature>
<organism>
    <name type="scientific">Macrococcus caseolyticus (strain JCSC5402)</name>
    <name type="common">Macrococcoides caseolyticum</name>
    <dbReference type="NCBI Taxonomy" id="458233"/>
    <lineage>
        <taxon>Bacteria</taxon>
        <taxon>Bacillati</taxon>
        <taxon>Bacillota</taxon>
        <taxon>Bacilli</taxon>
        <taxon>Bacillales</taxon>
        <taxon>Staphylococcaceae</taxon>
        <taxon>Macrococcoides</taxon>
    </lineage>
</organism>
<evidence type="ECO:0000255" key="1">
    <source>
        <dbReference type="HAMAP-Rule" id="MF_00435"/>
    </source>
</evidence>
<evidence type="ECO:0000255" key="2">
    <source>
        <dbReference type="PROSITE-ProRule" id="PRU01197"/>
    </source>
</evidence>
<evidence type="ECO:0000255" key="3">
    <source>
        <dbReference type="PROSITE-ProRule" id="PRU01198"/>
    </source>
</evidence>
<reference key="1">
    <citation type="journal article" date="2009" name="J. Bacteriol.">
        <title>Complete genome sequence of Macrococcus caseolyticus strain JCSCS5402, reflecting the ancestral genome of the human-pathogenic staphylococci.</title>
        <authorList>
            <person name="Baba T."/>
            <person name="Kuwahara-Arai K."/>
            <person name="Uchiyama I."/>
            <person name="Takeuchi F."/>
            <person name="Ito T."/>
            <person name="Hiramatsu K."/>
        </authorList>
    </citation>
    <scope>NUCLEOTIDE SEQUENCE [LARGE SCALE GENOMIC DNA]</scope>
    <source>
        <strain>JCSC5402</strain>
    </source>
</reference>